<dbReference type="EC" id="2.7.13.3" evidence="1"/>
<dbReference type="EMBL" id="AE006468">
    <property type="protein sequence ID" value="AAL20316.1"/>
    <property type="molecule type" value="Genomic_DNA"/>
</dbReference>
<dbReference type="RefSeq" id="NP_460357.1">
    <property type="nucleotide sequence ID" value="NC_003197.2"/>
</dbReference>
<dbReference type="RefSeq" id="WP_001050769.1">
    <property type="nucleotide sequence ID" value="NC_003197.2"/>
</dbReference>
<dbReference type="SMR" id="Q8ZPP5"/>
<dbReference type="STRING" id="99287.STM1392"/>
<dbReference type="PaxDb" id="99287-STM1392"/>
<dbReference type="GeneID" id="1252910"/>
<dbReference type="KEGG" id="stm:STM1392"/>
<dbReference type="PATRIC" id="fig|99287.12.peg.1476"/>
<dbReference type="HOGENOM" id="CLU_013919_0_0_6"/>
<dbReference type="OMA" id="LKGCAGQ"/>
<dbReference type="PhylomeDB" id="Q8ZPP5"/>
<dbReference type="BioCyc" id="SENT99287:STM1392-MONOMER"/>
<dbReference type="BRENDA" id="2.7.13.3">
    <property type="organism ID" value="5542"/>
</dbReference>
<dbReference type="PHI-base" id="PHI:2676"/>
<dbReference type="PHI-base" id="PHI:553"/>
<dbReference type="Proteomes" id="UP000001014">
    <property type="component" value="Chromosome"/>
</dbReference>
<dbReference type="GO" id="GO:0005886">
    <property type="term" value="C:plasma membrane"/>
    <property type="evidence" value="ECO:0000314"/>
    <property type="project" value="UniProtKB"/>
</dbReference>
<dbReference type="GO" id="GO:0005524">
    <property type="term" value="F:ATP binding"/>
    <property type="evidence" value="ECO:0007669"/>
    <property type="project" value="UniProtKB-KW"/>
</dbReference>
<dbReference type="GO" id="GO:0000155">
    <property type="term" value="F:phosphorelay sensor kinase activity"/>
    <property type="evidence" value="ECO:0007669"/>
    <property type="project" value="InterPro"/>
</dbReference>
<dbReference type="CDD" id="cd06225">
    <property type="entry name" value="HAMP"/>
    <property type="match status" value="1"/>
</dbReference>
<dbReference type="CDD" id="cd16922">
    <property type="entry name" value="HATPase_EvgS-ArcB-TorS-like"/>
    <property type="match status" value="1"/>
</dbReference>
<dbReference type="CDD" id="cd00082">
    <property type="entry name" value="HisKA"/>
    <property type="match status" value="1"/>
</dbReference>
<dbReference type="CDD" id="cd17546">
    <property type="entry name" value="REC_hyHK_CKI1_RcsC-like"/>
    <property type="match status" value="1"/>
</dbReference>
<dbReference type="FunFam" id="1.10.287.130:FF:000074">
    <property type="entry name" value="Histidine kinase"/>
    <property type="match status" value="1"/>
</dbReference>
<dbReference type="FunFam" id="3.40.50.2300:FF:000324">
    <property type="entry name" value="Histidine kinase"/>
    <property type="match status" value="1"/>
</dbReference>
<dbReference type="FunFam" id="3.30.565.10:FF:000037">
    <property type="entry name" value="Hybrid sensor histidine kinase/response regulator"/>
    <property type="match status" value="1"/>
</dbReference>
<dbReference type="Gene3D" id="1.10.287.130">
    <property type="match status" value="1"/>
</dbReference>
<dbReference type="Gene3D" id="3.40.50.2300">
    <property type="match status" value="1"/>
</dbReference>
<dbReference type="Gene3D" id="6.10.340.10">
    <property type="match status" value="1"/>
</dbReference>
<dbReference type="Gene3D" id="3.30.565.10">
    <property type="entry name" value="Histidine kinase-like ATPase, C-terminal domain"/>
    <property type="match status" value="1"/>
</dbReference>
<dbReference type="InterPro" id="IPR011006">
    <property type="entry name" value="CheY-like_superfamily"/>
</dbReference>
<dbReference type="InterPro" id="IPR003660">
    <property type="entry name" value="HAMP_dom"/>
</dbReference>
<dbReference type="InterPro" id="IPR036890">
    <property type="entry name" value="HATPase_C_sf"/>
</dbReference>
<dbReference type="InterPro" id="IPR005467">
    <property type="entry name" value="His_kinase_dom"/>
</dbReference>
<dbReference type="InterPro" id="IPR003661">
    <property type="entry name" value="HisK_dim/P_dom"/>
</dbReference>
<dbReference type="InterPro" id="IPR036097">
    <property type="entry name" value="HisK_dim/P_sf"/>
</dbReference>
<dbReference type="InterPro" id="IPR036641">
    <property type="entry name" value="HPT_dom_sf"/>
</dbReference>
<dbReference type="InterPro" id="IPR004358">
    <property type="entry name" value="Sig_transdc_His_kin-like_C"/>
</dbReference>
<dbReference type="InterPro" id="IPR001789">
    <property type="entry name" value="Sig_transdc_resp-reg_receiver"/>
</dbReference>
<dbReference type="NCBIfam" id="NF011874">
    <property type="entry name" value="PRK15347.1"/>
    <property type="match status" value="1"/>
</dbReference>
<dbReference type="PANTHER" id="PTHR45339">
    <property type="entry name" value="HYBRID SIGNAL TRANSDUCTION HISTIDINE KINASE J"/>
    <property type="match status" value="1"/>
</dbReference>
<dbReference type="PANTHER" id="PTHR45339:SF1">
    <property type="entry name" value="HYBRID SIGNAL TRANSDUCTION HISTIDINE KINASE J"/>
    <property type="match status" value="1"/>
</dbReference>
<dbReference type="Pfam" id="PF00672">
    <property type="entry name" value="HAMP"/>
    <property type="match status" value="1"/>
</dbReference>
<dbReference type="Pfam" id="PF02518">
    <property type="entry name" value="HATPase_c"/>
    <property type="match status" value="1"/>
</dbReference>
<dbReference type="Pfam" id="PF00512">
    <property type="entry name" value="HisKA"/>
    <property type="match status" value="1"/>
</dbReference>
<dbReference type="Pfam" id="PF00072">
    <property type="entry name" value="Response_reg"/>
    <property type="match status" value="1"/>
</dbReference>
<dbReference type="PRINTS" id="PR00344">
    <property type="entry name" value="BCTRLSENSOR"/>
</dbReference>
<dbReference type="SMART" id="SM00304">
    <property type="entry name" value="HAMP"/>
    <property type="match status" value="1"/>
</dbReference>
<dbReference type="SMART" id="SM00387">
    <property type="entry name" value="HATPase_c"/>
    <property type="match status" value="1"/>
</dbReference>
<dbReference type="SMART" id="SM00388">
    <property type="entry name" value="HisKA"/>
    <property type="match status" value="1"/>
</dbReference>
<dbReference type="SMART" id="SM00448">
    <property type="entry name" value="REC"/>
    <property type="match status" value="1"/>
</dbReference>
<dbReference type="SUPFAM" id="SSF55874">
    <property type="entry name" value="ATPase domain of HSP90 chaperone/DNA topoisomerase II/histidine kinase"/>
    <property type="match status" value="1"/>
</dbReference>
<dbReference type="SUPFAM" id="SSF52172">
    <property type="entry name" value="CheY-like"/>
    <property type="match status" value="1"/>
</dbReference>
<dbReference type="SUPFAM" id="SSF158472">
    <property type="entry name" value="HAMP domain-like"/>
    <property type="match status" value="1"/>
</dbReference>
<dbReference type="SUPFAM" id="SSF47226">
    <property type="entry name" value="Histidine-containing phosphotransfer domain, HPT domain"/>
    <property type="match status" value="1"/>
</dbReference>
<dbReference type="SUPFAM" id="SSF47384">
    <property type="entry name" value="Homodimeric domain of signal transducing histidine kinase"/>
    <property type="match status" value="1"/>
</dbReference>
<dbReference type="PROSITE" id="PS50885">
    <property type="entry name" value="HAMP"/>
    <property type="match status" value="1"/>
</dbReference>
<dbReference type="PROSITE" id="PS50109">
    <property type="entry name" value="HIS_KIN"/>
    <property type="match status" value="1"/>
</dbReference>
<dbReference type="PROSITE" id="PS50110">
    <property type="entry name" value="RESPONSE_REGULATORY"/>
    <property type="match status" value="1"/>
</dbReference>
<gene>
    <name evidence="30" type="primary">ssrA</name>
    <name evidence="30" type="synonym">spiR</name>
    <name evidence="33" type="ordered locus">STM1392</name>
</gene>
<keyword id="KW-0067">ATP-binding</keyword>
<keyword id="KW-0997">Cell inner membrane</keyword>
<keyword id="KW-1003">Cell membrane</keyword>
<keyword id="KW-0175">Coiled coil</keyword>
<keyword id="KW-0418">Kinase</keyword>
<keyword id="KW-0472">Membrane</keyword>
<keyword id="KW-0547">Nucleotide-binding</keyword>
<keyword id="KW-0597">Phosphoprotein</keyword>
<keyword id="KW-1185">Reference proteome</keyword>
<keyword id="KW-0808">Transferase</keyword>
<keyword id="KW-0812">Transmembrane</keyword>
<keyword id="KW-1133">Transmembrane helix</keyword>
<keyword id="KW-0902">Two-component regulatory system</keyword>
<keyword id="KW-0843">Virulence</keyword>
<accession>Q8ZPP5</accession>
<organism evidence="34">
    <name type="scientific">Salmonella typhimurium (strain LT2 / SGSC1412 / ATCC 700720)</name>
    <dbReference type="NCBI Taxonomy" id="99287"/>
    <lineage>
        <taxon>Bacteria</taxon>
        <taxon>Pseudomonadati</taxon>
        <taxon>Pseudomonadota</taxon>
        <taxon>Gammaproteobacteria</taxon>
        <taxon>Enterobacterales</taxon>
        <taxon>Enterobacteriaceae</taxon>
        <taxon>Salmonella</taxon>
    </lineage>
</organism>
<sequence>MNLLNLKNTLQTSLVIRLTFLFLLTTIIIWLLSVLTAAYISMVQKRQHIIEDLSVLSEMNIVLSNQRFEEAERDAKNLMYQCSLATEIHHNDIFPEVSRHLSVGPSNCTPTLNGEKHRLFLQSSDIDENSFRRDSFILNHKNEISLLSTDNPSDYSTLQPLTRKSFPLYPTHAGFYWSEPEYINGKGWHASVAVADQQGVFFEVTVKLPDLITKSHLPLDDSIRVWLDQNNHLLPFSYIPQKIRTQLENVTLHDGWQQIPGFLILRTTLHGPGWSLVTLYPYGNLHNRILKIILQQIPFTLTALVLMTSAFCWLLHRSLAKPLWRFVDVINKTATAPLSTRLPAQRLDELDSIAGAFNQLLDTLQVQYDNLENKVAERTQALNEAKKRAERANKRKSIHLTVISHELRTPMNGVLGAIELLQTTPLNIEQQGLADTARNCTLSLLAIINNLLDFSRIESGHFTLHMEETALLPLLDQAMQTIQGPAQSKKLSLRTFVGQHVPLYFHTDSIRLRQILVNLLGNAVKFTETGGIRLTVKRHEEQLIFLVSDSGKGIEIQQQSQIFTAFYQADTNSQGTGIGLTIASSLAKMMGGNLTLKSVPGVGTCVSLVLPLQEYQPPQPIKGTLSAPFCLHRQLACWGIRGEPPHQQNALLNAELLYFSGKLYDLAQQLILCTPNMPVINNLLPPWQLQILLVDDADINRDIIGKMLVSLGQHVTIAASSNEALTLSQQQRFDLVLIDIRMPEIDGIECVRLWHDEPNNLDPDCMFVALSASVATEDIHRCKKNGIHHYITKPVTLATLARYISIAAEYQLLRNIELQEQDPSRCSALLATDDMVINSKIFQSLDLLLADIENAVSAGEKIDQLIHTLKGCLGQIGQTELVCYVIDIENRVKMGKIIALEELTDLRQKIRMIFKNYTIT</sequence>
<evidence type="ECO:0000250" key="1">
    <source>
        <dbReference type="UniProtKB" id="P0AEJ4"/>
    </source>
</evidence>
<evidence type="ECO:0000255" key="2"/>
<evidence type="ECO:0000255" key="3">
    <source>
        <dbReference type="PROSITE-ProRule" id="PRU00102"/>
    </source>
</evidence>
<evidence type="ECO:0000255" key="4">
    <source>
        <dbReference type="PROSITE-ProRule" id="PRU00107"/>
    </source>
</evidence>
<evidence type="ECO:0000255" key="5">
    <source>
        <dbReference type="PROSITE-ProRule" id="PRU00169"/>
    </source>
</evidence>
<evidence type="ECO:0000269" key="6">
    <source>
    </source>
</evidence>
<evidence type="ECO:0000269" key="7">
    <source>
    </source>
</evidence>
<evidence type="ECO:0000269" key="8">
    <source>
    </source>
</evidence>
<evidence type="ECO:0000269" key="9">
    <source>
    </source>
</evidence>
<evidence type="ECO:0000269" key="10">
    <source>
    </source>
</evidence>
<evidence type="ECO:0000269" key="11">
    <source>
    </source>
</evidence>
<evidence type="ECO:0000269" key="12">
    <source>
    </source>
</evidence>
<evidence type="ECO:0000269" key="13">
    <source>
    </source>
</evidence>
<evidence type="ECO:0000269" key="14">
    <source>
    </source>
</evidence>
<evidence type="ECO:0000269" key="15">
    <source>
    </source>
</evidence>
<evidence type="ECO:0000269" key="16">
    <source>
    </source>
</evidence>
<evidence type="ECO:0000269" key="17">
    <source>
    </source>
</evidence>
<evidence type="ECO:0000269" key="18">
    <source>
    </source>
</evidence>
<evidence type="ECO:0000303" key="19">
    <source>
    </source>
</evidence>
<evidence type="ECO:0000303" key="20">
    <source>
    </source>
</evidence>
<evidence type="ECO:0000303" key="21">
    <source>
    </source>
</evidence>
<evidence type="ECO:0000303" key="22">
    <source>
    </source>
</evidence>
<evidence type="ECO:0000303" key="23">
    <source>
    </source>
</evidence>
<evidence type="ECO:0000303" key="24">
    <source>
    </source>
</evidence>
<evidence type="ECO:0000303" key="25">
    <source>
    </source>
</evidence>
<evidence type="ECO:0000303" key="26">
    <source>
    </source>
</evidence>
<evidence type="ECO:0000303" key="27">
    <source>
    </source>
</evidence>
<evidence type="ECO:0000303" key="28">
    <source>
    </source>
</evidence>
<evidence type="ECO:0000303" key="29">
    <source>
    </source>
</evidence>
<evidence type="ECO:0000303" key="30">
    <source>
    </source>
</evidence>
<evidence type="ECO:0000305" key="31"/>
<evidence type="ECO:0000305" key="32">
    <source>
    </source>
</evidence>
<evidence type="ECO:0000312" key="33">
    <source>
        <dbReference type="EMBL" id="AAL20316.1"/>
    </source>
</evidence>
<evidence type="ECO:0000312" key="34">
    <source>
        <dbReference type="Proteomes" id="UP000001014"/>
    </source>
</evidence>
<name>SPIR_SALTY</name>
<reference evidence="34" key="1">
    <citation type="journal article" date="2001" name="Nature">
        <title>Complete genome sequence of Salmonella enterica serovar Typhimurium LT2.</title>
        <authorList>
            <person name="McClelland M."/>
            <person name="Sanderson K.E."/>
            <person name="Spieth J."/>
            <person name="Clifton S.W."/>
            <person name="Latreille P."/>
            <person name="Courtney L."/>
            <person name="Porwollik S."/>
            <person name="Ali J."/>
            <person name="Dante M."/>
            <person name="Du F."/>
            <person name="Hou S."/>
            <person name="Layman D."/>
            <person name="Leonard S."/>
            <person name="Nguyen C."/>
            <person name="Scott K."/>
            <person name="Holmes A."/>
            <person name="Grewal N."/>
            <person name="Mulvaney E."/>
            <person name="Ryan E."/>
            <person name="Sun H."/>
            <person name="Florea L."/>
            <person name="Miller W."/>
            <person name="Stoneking T."/>
            <person name="Nhan M."/>
            <person name="Waterston R."/>
            <person name="Wilson R.K."/>
        </authorList>
    </citation>
    <scope>NUCLEOTIDE SEQUENCE [LARGE SCALE GENOMIC DNA]</scope>
    <source>
        <strain evidence="34">LT2 / SGSC1412 / ATCC 700720</strain>
    </source>
</reference>
<reference evidence="31" key="2">
    <citation type="journal article" date="1998" name="Mol. Microbiol.">
        <title>Macrophage-dependent induction of the Salmonella pathogenicity island 2 type III secretion system and its role in intracellular survival.</title>
        <authorList>
            <person name="Cirillo D.M."/>
            <person name="Valdivia R.H."/>
            <person name="Monack D.M."/>
            <person name="Falkow S."/>
        </authorList>
    </citation>
    <scope>FUNCTION</scope>
    <scope>INDUCTION</scope>
    <scope>DISRUPTION PHENOTYPE</scope>
    <source>
        <strain evidence="30">SL1344</strain>
    </source>
</reference>
<reference evidence="31" key="3">
    <citation type="journal article" date="2000" name="J. Bacteriol.">
        <title>OmpR regulates the two-component system SsrA-ssrB in Salmonella pathogenicity island 2.</title>
        <authorList>
            <person name="Lee A.K."/>
            <person name="Detweiler C.S."/>
            <person name="Falkow S."/>
        </authorList>
    </citation>
    <scope>FUNCTION</scope>
    <scope>INDUCTION</scope>
    <scope>DISRUPTION PHENOTYPE</scope>
    <source>
        <strain evidence="19">SL1344</strain>
    </source>
</reference>
<reference evidence="31" key="4">
    <citation type="journal article" date="2002" name="J. Bacteriol.">
        <title>Transcription of the SsrAB regulon is repressed by alkaline pH and is independent of PhoPQ and magnesium concentration.</title>
        <authorList>
            <person name="Miao E.A."/>
            <person name="Freeman J.A."/>
            <person name="Miller S.I."/>
        </authorList>
    </citation>
    <scope>FUNCTION</scope>
    <scope>DISRUPTION PHENOTYPE</scope>
    <source>
        <strain evidence="20">EM207</strain>
    </source>
</reference>
<reference evidence="31" key="5">
    <citation type="journal article" date="2003" name="Microbiology">
        <title>The roles of SsrA-SsrB and OmpR-EnvZ in the regulation of genes encoding the Salmonella typhimurium SPI-2 type III secretion system.</title>
        <authorList>
            <person name="Garmendia J."/>
            <person name="Beuzon C.R."/>
            <person name="Ruiz-Albert J."/>
            <person name="Holden D.W."/>
        </authorList>
    </citation>
    <scope>FUNCTION</scope>
    <scope>DISRUPTION PHENOTYPE</scope>
    <source>
        <strain evidence="21">ATCC 14028 / SGSC 2980 / CDC 6516-60 / NCTC 12023</strain>
    </source>
</reference>
<reference evidence="31" key="6">
    <citation type="journal article" date="2004" name="Mol. Microbiol.">
        <title>The response regulator SsrB activates transcription and binds to a region overlapping OmpR binding sites at Salmonella pathogenicity island 2.</title>
        <authorList>
            <person name="Feng X."/>
            <person name="Walthers D."/>
            <person name="Oropeza R."/>
            <person name="Kenney L.J."/>
        </authorList>
    </citation>
    <scope>SUBCELLULAR LOCATION</scope>
    <scope>DISRUPTION PHENOTYPE</scope>
    <source>
        <strain evidence="22">14028s / SGSC 2262</strain>
    </source>
</reference>
<reference evidence="31" key="7">
    <citation type="journal article" date="2005" name="Vet. Microbiol.">
        <title>Survival of Salmonella serovar Typhimurium inside porcine monocytes is associated with complement binding and suppression of the production of reactive oxygen species.</title>
        <authorList>
            <person name="Donne E."/>
            <person name="Pasmans F."/>
            <person name="Boyen F."/>
            <person name="Van Immerseel F."/>
            <person name="Adriaensen C."/>
            <person name="Hernalsteens J.P."/>
            <person name="Ducatelle R."/>
            <person name="Haesebrouck F."/>
        </authorList>
    </citation>
    <scope>DISRUPTION PHENOTYPE</scope>
    <source>
        <strain evidence="23">112910a</strain>
    </source>
</reference>
<reference evidence="31" key="8">
    <citation type="journal article" date="2008" name="Vet. Microbiol.">
        <title>A limited role for SsrA/B in persistent Salmonella Typhimurium infections in pigs.</title>
        <authorList>
            <person name="Boyen F."/>
            <person name="Pasmans F."/>
            <person name="Van Immerseel F."/>
            <person name="Morgan E."/>
            <person name="Botteldoorn N."/>
            <person name="Heyndrickx M."/>
            <person name="Volf J."/>
            <person name="Favoreel H."/>
            <person name="Hernalsteens J.P."/>
            <person name="Ducatelle R."/>
            <person name="Haesebrouck F."/>
        </authorList>
    </citation>
    <scope>FUNCTION</scope>
    <scope>DISRUPTION PHENOTYPE</scope>
    <source>
        <strain evidence="24">112910a</strain>
    </source>
</reference>
<reference evidence="31" key="9">
    <citation type="journal article" date="2009" name="PLoS Pathog.">
        <title>Coordinated regulation of virulence during systemic infection of Salmonella enterica serovar Typhimurium.</title>
        <authorList>
            <person name="Yoon H."/>
            <person name="McDermott J.E."/>
            <person name="Porwollik S."/>
            <person name="McClelland M."/>
            <person name="Heffron F."/>
        </authorList>
    </citation>
    <scope>FUNCTION</scope>
    <scope>DISRUPTION PHENOTYPE</scope>
    <source>
        <strain evidence="25">14028s / SGSC 2262</strain>
    </source>
</reference>
<reference evidence="31" key="10">
    <citation type="journal article" date="2015" name="Mol. Microbiol.">
        <title>Multiple histidines in the periplasmic domain of the Salmonella enterica sensor kinase SsrA enhance signaling in response to extracellular acidification.</title>
        <authorList>
            <person name="Mulder D.T."/>
            <person name="McPhee J.B."/>
            <person name="Reid-Yu S.A."/>
            <person name="Stogios P.J."/>
            <person name="Savchenko A."/>
            <person name="Coombes B.K."/>
        </authorList>
    </citation>
    <scope>FUNCTION</scope>
    <scope>DISRUPTION PHENOTYPE</scope>
    <scope>MUTAGENESIS OF HIS-48; ARG-67; PHE-68; GLU-72; ASP-74; CYS-82; 89-HIS-HIS-90; SER-98; HIS-100; CYS-108; HIS-117; HIS-140; HIS-172; TRP-177; TRP-188; HIS-189; HIS-216; TRP-226; ASP-228; HIS-232; HIS-253; ARG-266; HIS-270; TRP-274; TYR-282; HIS-286 AND CYS-312</scope>
    <source>
        <strain evidence="26">SL1344</strain>
    </source>
</reference>
<reference evidence="31" key="11">
    <citation type="journal article" date="2016" name="Elife">
        <title>The horizontally-acquired response regulator SsrB drives a Salmonella lifestyle switch by relieving biofilm silencing.</title>
        <authorList>
            <person name="Desai S.K."/>
            <person name="Winardhi R.S."/>
            <person name="Periasamy S."/>
            <person name="Dykas M.M."/>
            <person name="Jie Y."/>
            <person name="Kenney L.J."/>
        </authorList>
    </citation>
    <scope>DISRUPTION PHENOTYPE</scope>
    <scope>MUTAGENESIS OF HIS-405; ASP-739 AND HIS-867</scope>
    <source>
        <strain evidence="27">14028s / SGSC 2262</strain>
    </source>
</reference>
<reference evidence="31" key="12">
    <citation type="journal article" date="2019" name="Elife">
        <title>Single cell, super-resolution imaging reveals an acid pH-dependent conformational switch in SsrB regulates SPI-2.</title>
        <authorList>
            <person name="Liew A.T.F."/>
            <person name="Foo Y.H."/>
            <person name="Gao Y."/>
            <person name="Zangoui P."/>
            <person name="Singh M.K."/>
            <person name="Gulvady R."/>
            <person name="Kenney L.J."/>
        </authorList>
    </citation>
    <scope>INDUCTION</scope>
    <scope>DISRUPTION PHENOTYPE</scope>
    <source>
        <strain evidence="29">14028s / SGSC 2262</strain>
    </source>
</reference>
<reference evidence="31" key="13">
    <citation type="journal article" date="2017" name="PLoS Pathog.">
        <title>The transcriptional regulator SsrB is involved in a molecular switch controlling virulence lifestyles of Salmonella.</title>
        <authorList>
            <person name="Perez-Morales D."/>
            <person name="Banda M.M."/>
            <person name="Chau N.Y.E."/>
            <person name="Salgado H."/>
            <person name="Martinez-Flores I."/>
            <person name="Ibarra J.A."/>
            <person name="Ilyas B."/>
            <person name="Coombes B.K."/>
            <person name="Bustamante V.H."/>
        </authorList>
    </citation>
    <scope>DISRUPTION PHENOTYPE</scope>
    <source>
        <strain evidence="28">SL1344</strain>
    </source>
</reference>
<reference evidence="31" key="14">
    <citation type="journal article" date="2020" name="Cell Chem. Biol.">
        <title>Targeting Two-Component Systems Uncovers a Small-Molecule Inhibitor of Salmonella Virulence.</title>
        <authorList>
            <person name="Tsai C.N."/>
            <person name="MacNair C.R."/>
            <person name="Cao M.P.T."/>
            <person name="Perry J.N."/>
            <person name="Magolan J."/>
            <person name="Brown E.D."/>
            <person name="Coombes B.K."/>
        </authorList>
    </citation>
    <scope>INDUCTION</scope>
    <scope>DISRUPTION PHENOTYPE</scope>
</reference>
<comment type="function">
    <text evidence="6 7 8 11 12 13 18">Member of the two-component regulatory system SsrA/SsrB (SpiR/SsrB) that is required for intracellular proliferation and systemic dissemination within the host (PubMed:10633113, PubMed:11844786, PubMed:12949164, PubMed:18068913, PubMed:19229334, PubMed:25442048, PubMed:9786194). When inside acidic Salmonella-containing vesicles (SCV) within host cells the SsrA sensor kinase autophosphorylates and the phosphoryl group is transferred to the response regulator SsrB; phosphorylated SsrB activates the expression of genes encoding virulence proteins, including pathogenicity island 2 (SPI2) and other horizontally acquired genes, and antagonizes the action of transcriptional repressor hns (H-NS) (PubMed:11844786, PubMed:12949164, PubMed:18068913, PubMed:25442048, PubMed:9786194).</text>
</comment>
<comment type="catalytic activity">
    <reaction evidence="1">
        <text>ATP + protein L-histidine = ADP + protein N-phospho-L-histidine.</text>
        <dbReference type="EC" id="2.7.13.3"/>
    </reaction>
</comment>
<comment type="subcellular location">
    <subcellularLocation>
        <location evidence="32">Cell inner membrane</location>
        <topology evidence="2">Multi-pass membrane protein</topology>
    </subcellularLocation>
</comment>
<comment type="induction">
    <text evidence="6 16 17 18">Induced early after entry into host cells in an OmpR-dependent manner (PubMed:10633113, PubMed:9786194). Induced 3-fold by an acidic environment (PubMed:10633113, PubMed:31033442, PubMed:9786194). Repressed in conditions of high osmolarity (PubMed:10633113). Repressed by methyl-3,4-dephostatin (PubMed:32413287).</text>
</comment>
<comment type="PTM">
    <text evidence="1">Autophosphorylated.</text>
</comment>
<comment type="disruption phenotype">
    <text evidence="6 7 8 9 10 11 12 13 14 15 16 17 18">Abnormal expression of genes encoding virulence proteins (PubMed:11844786, PubMed:12949164, PubMed:15491370, PubMed:31033442, PubMed:32413287, PubMed:9786194). Decreases expression of genes responsive to acidic pH and when growing intracellularly (PubMed:12949164, PubMed:19229334, PubMed:25442048, PubMed:31033442). Increases expression of invasion protein invF following invasion of macrophages (PubMed:28704543). Abolishes replication within macrophages (PubMed:10633113). Decreases fitness in the spleen and liver of mouse (PubMed:32413287). Double knockout with ssrB leads to impaired replication in mouse and pig macrophages and decreases virulence in mouse and pig (PubMed:18068913, PubMed:19229334). No effect on level of biofilm formation (PubMed:26880544). Does not affect the production of reactive oxygen species (ROS) in infected pigs (PubMed:15863279).</text>
</comment>
<feature type="chain" id="PRO_0000460344" description="Sensor histidine kinase SsrA">
    <location>
        <begin position="1"/>
        <end position="920"/>
    </location>
</feature>
<feature type="topological domain" description="Cytoplasmic" evidence="2">
    <location>
        <begin position="1"/>
        <end position="19"/>
    </location>
</feature>
<feature type="transmembrane region" description="Helical" evidence="2">
    <location>
        <begin position="20"/>
        <end position="40"/>
    </location>
</feature>
<feature type="topological domain" description="Periplasmic" evidence="2">
    <location>
        <begin position="41"/>
        <end position="291"/>
    </location>
</feature>
<feature type="transmembrane region" description="Helical" evidence="2">
    <location>
        <begin position="292"/>
        <end position="312"/>
    </location>
</feature>
<feature type="topological domain" description="Cytoplasmic" evidence="2">
    <location>
        <begin position="313"/>
        <end position="920"/>
    </location>
</feature>
<feature type="domain" description="HAMP" evidence="3">
    <location>
        <begin position="317"/>
        <end position="369"/>
    </location>
</feature>
<feature type="domain" description="Histidine kinase" evidence="4">
    <location>
        <begin position="402"/>
        <end position="614"/>
    </location>
</feature>
<feature type="domain" description="Response regulatory" evidence="5">
    <location>
        <begin position="690"/>
        <end position="808"/>
    </location>
</feature>
<feature type="coiled-coil region" evidence="2">
    <location>
        <begin position="354"/>
        <end position="395"/>
    </location>
</feature>
<feature type="binding site" evidence="1">
    <location>
        <position position="405"/>
    </location>
    <ligand>
        <name>ATP</name>
        <dbReference type="ChEBI" id="CHEBI:30616"/>
    </ligand>
</feature>
<feature type="binding site" evidence="1">
    <location>
        <position position="549"/>
    </location>
    <ligand>
        <name>ATP</name>
        <dbReference type="ChEBI" id="CHEBI:30616"/>
    </ligand>
</feature>
<feature type="modified residue" description="Phosphohistidine; by autocatalysis" evidence="4">
    <location>
        <position position="405"/>
    </location>
</feature>
<feature type="modified residue" description="4-aspartylphosphate" evidence="5">
    <location>
        <position position="739"/>
    </location>
</feature>
<feature type="mutagenesis site" description="Decreases expression of genes responsive to acidic pH at low and neutral pH." evidence="13">
    <original>H</original>
    <variation>A</variation>
    <location>
        <position position="48"/>
    </location>
</feature>
<feature type="mutagenesis site" description="Decreases expression of genes responsive to acidic pH at neutral pH but not at low pH." evidence="13">
    <original>R</original>
    <variation>A</variation>
    <location>
        <position position="67"/>
    </location>
</feature>
<feature type="mutagenesis site" description="Decreases expression of genes responsive to acidic pH at low and neutral pH." evidence="13">
    <original>F</original>
    <variation>A</variation>
    <location>
        <position position="68"/>
    </location>
</feature>
<feature type="mutagenesis site" description="Decreases expression of genes responsive to acidic pH at low and neutral pH." evidence="13">
    <original>E</original>
    <variation>A</variation>
    <location>
        <position position="72"/>
    </location>
</feature>
<feature type="mutagenesis site" description="Increases expression of genes responsive to acidic pH at low and neutral pH." evidence="13">
    <original>D</original>
    <variation>A</variation>
    <location>
        <position position="74"/>
    </location>
</feature>
<feature type="mutagenesis site" description="Decreases expression of genes responsive to acidic pH at neutral but not at low pH." evidence="13">
    <original>C</original>
    <variation>A</variation>
    <location>
        <position position="82"/>
    </location>
</feature>
<feature type="mutagenesis site" description="Decreases expression of genes responsive to acidic pH and at low pH, lowers survival in macrophages, and decreases fitness in mouse; when associated with A-100; A-117; A-140; A-172; A-216; A-232; A-253 and A-270." evidence="13">
    <original>HH</original>
    <variation>AA</variation>
    <location>
        <begin position="89"/>
        <end position="90"/>
    </location>
</feature>
<feature type="mutagenesis site" description="Decreases expression of genes responsive to acidic pH at neutral but not at low pH." evidence="13">
    <original>S</original>
    <variation>A</variation>
    <location>
        <position position="98"/>
    </location>
</feature>
<feature type="mutagenesis site" description="Decreases expression of genes responsive to acidic pH at neutral but not low pH. Decreases expression of genes responsive to acidic pH and at low pH, lowers survival in macrophages, and decreases fitness in mouse; when associated with 89-A--A-90; A-117; A-140; A-172; A-216; A-232; A-253 and A-270." evidence="13">
    <original>H</original>
    <variation>A</variation>
    <location>
        <position position="100"/>
    </location>
</feature>
<feature type="mutagenesis site" description="Decreases expression of genes responsive to acidic pH and at neutral pH." evidence="13">
    <original>C</original>
    <variation>A</variation>
    <location>
        <position position="108"/>
    </location>
</feature>
<feature type="mutagenesis site" description="Decreases expression of genes responsive to acidic pH at low and neutral pH. Decreases expression of genes responsive to acidic pH and at low pH, lowers survival in macrophages, and decreases fitness in mouse; when associated with 89-A--A-90; A-100; A-140; A-172; A-216; A-232; A-253 and A-270." evidence="13">
    <original>H</original>
    <variation>A</variation>
    <location>
        <position position="117"/>
    </location>
</feature>
<feature type="mutagenesis site" description="Decreases expression of genes responsive to acidic pH and at low pH, lowers survival in macrophages, and decreases fitness in mouse; when associated with 89-A--A-90; A-100; A-117; A-172; A-216; A-232; A-253 and A-270." evidence="13">
    <original>H</original>
    <variation>A</variation>
    <location>
        <position position="140"/>
    </location>
</feature>
<feature type="mutagenesis site" description="Decreases expression of genes responsive to acidic pH at neutral but not low pH. Decreases expression of genes responsive to acidic pH and at low pH, lowers survival in macrophages, and decreases fitness in mouse; when associated with 89-A--A-90; A-100; A-117; A-140; A-216; A-232; A-253 and A-270." evidence="13">
    <original>H</original>
    <variation>A</variation>
    <location>
        <position position="172"/>
    </location>
</feature>
<feature type="mutagenesis site" description="Decreases expression of genes responsive to acidic pH at neutral pH but not at low pH." evidence="13">
    <original>W</original>
    <variation>A</variation>
    <location>
        <position position="177"/>
    </location>
</feature>
<feature type="mutagenesis site" description="Decreases expression of genes responsive to acidic pH at neutral and at low pH." evidence="13">
    <original>W</original>
    <variation>A</variation>
    <location>
        <position position="188"/>
    </location>
</feature>
<feature type="mutagenesis site" description="Decreases expression of genes responsive to acidic pH at neutral pH but not at low pH." evidence="13">
    <original>H</original>
    <variation>A</variation>
    <location>
        <position position="189"/>
    </location>
</feature>
<feature type="mutagenesis site" description="Decreases expression of genes responsive to acidic pH and at low pH, lowers survival in macrophages, and decreases fitness in mouse; when associated with 89-A--A-90; A-100; A-117; A-140; A-172; A-232; A-253 and A-270." evidence="13">
    <original>H</original>
    <variation>A</variation>
    <location>
        <position position="216"/>
    </location>
</feature>
<feature type="mutagenesis site" description="Decreases expression of genes responsive to acidic pH at neutral pH but not at low pH." evidence="13">
    <original>W</original>
    <variation>A</variation>
    <location>
        <position position="226"/>
    </location>
</feature>
<feature type="mutagenesis site" description="Decreases expression of genes responsive to acidic pH at neutral and at low pH." evidence="13">
    <original>D</original>
    <variation>A</variation>
    <location>
        <position position="228"/>
    </location>
</feature>
<feature type="mutagenesis site" description="Decreases expression of genes responsive to acidic pH and at low pH, lowers survival in macrophages, and decreases fitness in mouse; when associated with 89-A--A-90; A-100; A-117; A-140; A-172; A-216; A-253 and A-270." evidence="13">
    <original>H</original>
    <variation>A</variation>
    <location>
        <position position="232"/>
    </location>
</feature>
<feature type="mutagenesis site" description="Decreases expression of genes responsive to acidic pH and at low pH, lowers survival in macrophages, and decreases fitness in mouse; when associated with 89-A--A-90; A-100; A-117; A-140; A-172; A-216; A-232 and A-270." evidence="13">
    <original>H</original>
    <variation>A</variation>
    <location>
        <position position="253"/>
    </location>
</feature>
<feature type="mutagenesis site" description="Decreases expression of genes responsive to acidic pH at neutral and at low pH." evidence="13">
    <original>R</original>
    <variation>A</variation>
    <location>
        <position position="266"/>
    </location>
</feature>
<feature type="mutagenesis site" description="Decreases expression of genes responsive to acidic pH at neutral and at low pH. Decreases expression of genes responsive to acidic pH and at low pH, lowers survival in macrophages, and decreases fitness in mouse; when associated with 89-A--A-90; A-100; A-117; A-140; A-172; A-216; A-232 and A-253." evidence="13">
    <original>H</original>
    <variation>A</variation>
    <location>
        <position position="270"/>
    </location>
</feature>
<feature type="mutagenesis site" description="Decreases expression of genes responsive to acidic pH at neutral and at low pH." evidence="13">
    <original>W</original>
    <variation>A</variation>
    <location>
        <position position="274"/>
    </location>
</feature>
<feature type="mutagenesis site" description="Decreases expression of genes responsive to acidic pH at neutral and at low pH." evidence="13">
    <original>Y</original>
    <variation>A</variation>
    <location>
        <position position="282"/>
    </location>
</feature>
<feature type="mutagenesis site" description="Increases expression of genes responsive to acidic pH at neutral pH." evidence="13">
    <original>H</original>
    <variation>A</variation>
    <location>
        <position position="286"/>
    </location>
</feature>
<feature type="mutagenesis site" description="Decreases expression of genes responsive to acidic pH at neutral and at low pH." evidence="13">
    <original>C</original>
    <variation>A</variation>
    <location>
        <position position="312"/>
    </location>
</feature>
<feature type="mutagenesis site" description="Leads to abnormal regulation of virulence gene expression. No effect on level of biofilm formation." evidence="14">
    <original>H</original>
    <variation>Q</variation>
    <location>
        <position position="405"/>
    </location>
</feature>
<feature type="mutagenesis site" description="Leads to abnormal regulation of virulence gene expression. No effect on level of biofilm formation." evidence="14">
    <original>D</original>
    <variation>A</variation>
    <location>
        <position position="739"/>
    </location>
</feature>
<feature type="mutagenesis site" description="Leads to abnormal regulation of virulence gene expression. No effect on level of biofilm formation." evidence="14">
    <original>H</original>
    <variation>Q</variation>
    <location>
        <position position="867"/>
    </location>
</feature>
<protein>
    <recommendedName>
        <fullName evidence="31">Sensor histidine kinase SsrA</fullName>
        <ecNumber evidence="1">2.7.13.3</ecNumber>
    </recommendedName>
</protein>
<proteinExistence type="evidence at protein level"/>